<protein>
    <recommendedName>
        <fullName>Histone H4</fullName>
    </recommendedName>
</protein>
<organism>
    <name type="scientific">Phanerodontia chrysosporium</name>
    <name type="common">White-rot fungus</name>
    <name type="synonym">Sporotrichum pruinosum</name>
    <dbReference type="NCBI Taxonomy" id="2822231"/>
    <lineage>
        <taxon>Eukaryota</taxon>
        <taxon>Fungi</taxon>
        <taxon>Dikarya</taxon>
        <taxon>Basidiomycota</taxon>
        <taxon>Agaricomycotina</taxon>
        <taxon>Agaricomycetes</taxon>
        <taxon>Polyporales</taxon>
        <taxon>Phanerochaetaceae</taxon>
        <taxon>Phanerodontia</taxon>
    </lineage>
</organism>
<feature type="initiator methionine" description="Removed" evidence="1">
    <location>
        <position position="1"/>
    </location>
</feature>
<feature type="chain" id="PRO_0000158346" description="Histone H4">
    <location>
        <begin position="2"/>
        <end position="103"/>
    </location>
</feature>
<feature type="DNA-binding region">
    <location>
        <begin position="17"/>
        <end position="21"/>
    </location>
</feature>
<feature type="region of interest" description="Disordered" evidence="4">
    <location>
        <begin position="1"/>
        <end position="20"/>
    </location>
</feature>
<feature type="compositionally biased region" description="Gly residues" evidence="4">
    <location>
        <begin position="1"/>
        <end position="14"/>
    </location>
</feature>
<feature type="modified residue" description="N6-acetyl-N6-methyllysine; alternate" evidence="3">
    <location>
        <position position="6"/>
    </location>
</feature>
<feature type="modified residue" description="N6-methyllysine; alternate" evidence="2">
    <location>
        <position position="6"/>
    </location>
</feature>
<feature type="modified residue" description="N6-methyllysine; alternate" evidence="2">
    <location>
        <position position="9"/>
    </location>
</feature>
<feature type="modified residue" description="N6-acetyl-N6-methyllysine; alternate" evidence="3">
    <location>
        <position position="13"/>
    </location>
</feature>
<feature type="modified residue" description="N6-methyllysine; alternate" evidence="2">
    <location>
        <position position="13"/>
    </location>
</feature>
<feature type="modified residue" description="N6-glutaryllysine" evidence="2">
    <location>
        <position position="92"/>
    </location>
</feature>
<comment type="function">
    <text>Core component of nucleosome. Nucleosomes wrap and compact DNA into chromatin, limiting DNA accessibility to the cellular machineries which require DNA as a template. Histones thereby play a central role in transcription regulation, DNA repair, DNA replication and chromosomal stability. DNA accessibility is regulated via a complex set of post-translational modifications of histones, also called histone code, and nucleosome remodeling.</text>
</comment>
<comment type="subunit">
    <text>The nucleosome is a histone octamer containing two molecules each of H2A, H2B, H3 and H4 assembled in one H3-H4 heterotetramer and two H2A-H2B heterodimers. The octamer wraps approximately 147 bp of DNA.</text>
</comment>
<comment type="subcellular location">
    <subcellularLocation>
        <location evidence="1">Nucleus</location>
    </subcellularLocation>
    <subcellularLocation>
        <location evidence="1">Chromosome</location>
    </subcellularLocation>
</comment>
<comment type="PTM">
    <text evidence="2">Glutarylation at Lys-92 (H4K91glu) destabilizes nucleosomes by promoting dissociation of the H2A-H2B dimers from nucleosomes.</text>
</comment>
<comment type="similarity">
    <text evidence="5">Belongs to the histone H4 family.</text>
</comment>
<sequence>MSGRGKGGKGLGKGGAKRHRKILRDNIQGITKPAIRRLARRGGVKRISGLIYEETRGVLKIFLENVIRDSVTYTEHAKRKTVTALDVVYALKRSGRTLYGFGA</sequence>
<gene>
    <name type="primary">H4.1</name>
    <name type="synonym">HHFA</name>
</gene>
<gene>
    <name type="primary">H4.2</name>
</gene>
<name>H4_PHACH</name>
<accession>P62792</accession>
<accession>P35058</accession>
<reference key="1">
    <citation type="submission" date="1992-09" db="EMBL/GenBank/DDBJ databases">
        <title>Histone H4 genes and putative regulatory elements in Phanerochaete chrysosporium.</title>
        <authorList>
            <person name="Gessner M."/>
            <person name="Raeder U."/>
        </authorList>
    </citation>
    <scope>NUCLEOTIDE SEQUENCE [GENOMIC DNA]</scope>
    <source>
        <strain>ATCC 34541 / NBRC 31249 / ME-446 / PRL 2750</strain>
    </source>
</reference>
<keyword id="KW-0007">Acetylation</keyword>
<keyword id="KW-0158">Chromosome</keyword>
<keyword id="KW-0238">DNA-binding</keyword>
<keyword id="KW-0488">Methylation</keyword>
<keyword id="KW-0544">Nucleosome core</keyword>
<keyword id="KW-0539">Nucleus</keyword>
<evidence type="ECO:0000250" key="1"/>
<evidence type="ECO:0000250" key="2">
    <source>
        <dbReference type="UniProtKB" id="P02309"/>
    </source>
</evidence>
<evidence type="ECO:0000250" key="3">
    <source>
        <dbReference type="UniProtKB" id="P62805"/>
    </source>
</evidence>
<evidence type="ECO:0000256" key="4">
    <source>
        <dbReference type="SAM" id="MobiDB-lite"/>
    </source>
</evidence>
<evidence type="ECO:0000305" key="5"/>
<dbReference type="EMBL" id="Z15134">
    <property type="protein sequence ID" value="CAA78837.1"/>
    <property type="molecule type" value="Genomic_DNA"/>
</dbReference>
<dbReference type="EMBL" id="Z15135">
    <property type="protein sequence ID" value="CAA78838.1"/>
    <property type="molecule type" value="Genomic_DNA"/>
</dbReference>
<dbReference type="PIR" id="S25638">
    <property type="entry name" value="S25638"/>
</dbReference>
<dbReference type="SMR" id="P62792"/>
<dbReference type="EnsemblFungi" id="AGR57_3111T0">
    <property type="protein sequence ID" value="AGR57_3111T0-p1"/>
    <property type="gene ID" value="AGR57_3111"/>
</dbReference>
<dbReference type="VEuPathDB" id="FungiDB:AGR57_3111"/>
<dbReference type="OMA" id="QKEHING"/>
<dbReference type="GO" id="GO:0000786">
    <property type="term" value="C:nucleosome"/>
    <property type="evidence" value="ECO:0007669"/>
    <property type="project" value="UniProtKB-KW"/>
</dbReference>
<dbReference type="GO" id="GO:0005634">
    <property type="term" value="C:nucleus"/>
    <property type="evidence" value="ECO:0007669"/>
    <property type="project" value="UniProtKB-SubCell"/>
</dbReference>
<dbReference type="GO" id="GO:0003677">
    <property type="term" value="F:DNA binding"/>
    <property type="evidence" value="ECO:0007669"/>
    <property type="project" value="UniProtKB-KW"/>
</dbReference>
<dbReference type="GO" id="GO:0046982">
    <property type="term" value="F:protein heterodimerization activity"/>
    <property type="evidence" value="ECO:0007669"/>
    <property type="project" value="InterPro"/>
</dbReference>
<dbReference type="GO" id="GO:0030527">
    <property type="term" value="F:structural constituent of chromatin"/>
    <property type="evidence" value="ECO:0007669"/>
    <property type="project" value="InterPro"/>
</dbReference>
<dbReference type="CDD" id="cd22912">
    <property type="entry name" value="HFD_H4"/>
    <property type="match status" value="1"/>
</dbReference>
<dbReference type="FunFam" id="1.10.20.10:FF:000002">
    <property type="entry name" value="Histone H4"/>
    <property type="match status" value="1"/>
</dbReference>
<dbReference type="Gene3D" id="1.10.20.10">
    <property type="entry name" value="Histone, subunit A"/>
    <property type="match status" value="1"/>
</dbReference>
<dbReference type="InterPro" id="IPR035425">
    <property type="entry name" value="CENP-T/H4_C"/>
</dbReference>
<dbReference type="InterPro" id="IPR009072">
    <property type="entry name" value="Histone-fold"/>
</dbReference>
<dbReference type="InterPro" id="IPR001951">
    <property type="entry name" value="Histone_H4"/>
</dbReference>
<dbReference type="InterPro" id="IPR019809">
    <property type="entry name" value="Histone_H4_CS"/>
</dbReference>
<dbReference type="PANTHER" id="PTHR10484">
    <property type="entry name" value="HISTONE H4"/>
    <property type="match status" value="1"/>
</dbReference>
<dbReference type="Pfam" id="PF15511">
    <property type="entry name" value="CENP-T_C"/>
    <property type="match status" value="1"/>
</dbReference>
<dbReference type="PRINTS" id="PR00623">
    <property type="entry name" value="HISTONEH4"/>
</dbReference>
<dbReference type="SMART" id="SM00417">
    <property type="entry name" value="H4"/>
    <property type="match status" value="1"/>
</dbReference>
<dbReference type="SUPFAM" id="SSF47113">
    <property type="entry name" value="Histone-fold"/>
    <property type="match status" value="1"/>
</dbReference>
<dbReference type="PROSITE" id="PS00047">
    <property type="entry name" value="HISTONE_H4"/>
    <property type="match status" value="1"/>
</dbReference>
<proteinExistence type="inferred from homology"/>